<protein>
    <recommendedName>
        <fullName>Probable acetylxylan esterase A</fullName>
        <ecNumber>3.1.1.72</ecNumber>
    </recommendedName>
</protein>
<name>AXE1_ASPFN</name>
<proteinExistence type="inferred from homology"/>
<organism>
    <name type="scientific">Aspergillus flavus (strain ATCC 200026 / FGSC A1120 / IAM 13836 / NRRL 3357 / JCM 12722 / SRRC 167)</name>
    <dbReference type="NCBI Taxonomy" id="332952"/>
    <lineage>
        <taxon>Eukaryota</taxon>
        <taxon>Fungi</taxon>
        <taxon>Dikarya</taxon>
        <taxon>Ascomycota</taxon>
        <taxon>Pezizomycotina</taxon>
        <taxon>Eurotiomycetes</taxon>
        <taxon>Eurotiomycetidae</taxon>
        <taxon>Eurotiales</taxon>
        <taxon>Aspergillaceae</taxon>
        <taxon>Aspergillus</taxon>
        <taxon>Aspergillus subgen. Circumdati</taxon>
    </lineage>
</organism>
<evidence type="ECO:0000250" key="1"/>
<evidence type="ECO:0000255" key="2"/>
<evidence type="ECO:0000305" key="3"/>
<comment type="function">
    <text evidence="1">Acetylxylan esterase involved in the hydrolysis of xylan, a major structural heterogeneous polysaccharide found in plant biomass representing the second most abundant polysaccharide in the biosphere, after cellulose. Degrades acetylated xylans by cleaving acetyl side groups from the hetero-xylan backbone (By similarity).</text>
</comment>
<comment type="catalytic activity">
    <reaction>
        <text>Deacetylation of xylans and xylo-oligosaccharides.</text>
        <dbReference type="EC" id="3.1.1.72"/>
    </reaction>
</comment>
<comment type="pathway">
    <text>Glycan degradation; xylan degradation.</text>
</comment>
<comment type="subunit">
    <text evidence="1">Monomer.</text>
</comment>
<comment type="subcellular location">
    <subcellularLocation>
        <location evidence="1">Secreted</location>
    </subcellularLocation>
</comment>
<comment type="similarity">
    <text evidence="3">Belongs to the carbohydrate esterase 1 (CE1) family. AxeA subfamily.</text>
</comment>
<comment type="caution">
    <text evidence="3">The C-terminal carbohydrate-binding module (CBM) extension found in some acetylxylan esterases from other species is absent.</text>
</comment>
<reference key="1">
    <citation type="journal article" date="2015" name="Genome Announc.">
        <title>Genome sequence of Aspergillus flavus NRRL 3357, a strain that causes aflatoxin contamination of food and feed.</title>
        <authorList>
            <person name="Nierman W.C."/>
            <person name="Yu J."/>
            <person name="Fedorova-Abrams N.D."/>
            <person name="Losada L."/>
            <person name="Cleveland T.E."/>
            <person name="Bhatnagar D."/>
            <person name="Bennett J.W."/>
            <person name="Dean R."/>
            <person name="Payne G.A."/>
        </authorList>
    </citation>
    <scope>NUCLEOTIDE SEQUENCE [LARGE SCALE GENOMIC DNA]</scope>
    <source>
        <strain>ATCC 200026 / FGSC A1120 / IAM 13836 / NRRL 3357 / JCM 12722 / SRRC 167</strain>
    </source>
</reference>
<sequence>MILLSYLLTYLLCALTCSARAIHNGRSLIPRAGSLEQVTDFGDNPSNVKMYIYVPTNLASNPGIIVAIHYCTGTAQAYYQGSPYAQLAETHGFIVIYPESPYEGTCWDVSSQATLTHNGGGNSNSIANMVTWTTKQYNADSSKVFVTGTSSGAMMTNVMAATYPDLFAAGIAYAGVPAGCFLSTADQPDAWNSTCAQGQSITTPEHWASIAEAMYPDYSGSRPKMQIYHGNVDTTLYPQNYEETCKQWAGVFGYNYDAPESTESNTPEANWSRTTWGPNLQGILAGGVGHNIQIHGDEDMKWFGFTN</sequence>
<dbReference type="EC" id="3.1.1.72"/>
<dbReference type="EMBL" id="EQ963476">
    <property type="protein sequence ID" value="EED52855.1"/>
    <property type="molecule type" value="Genomic_DNA"/>
</dbReference>
<dbReference type="RefSeq" id="XP_002378019.1">
    <property type="nucleotide sequence ID" value="XM_002377978.1"/>
</dbReference>
<dbReference type="SMR" id="B8NBI2"/>
<dbReference type="STRING" id="332952.B8NBI2"/>
<dbReference type="ESTHER" id="aspor-axe1">
    <property type="family name" value="Esterase_phb"/>
</dbReference>
<dbReference type="GlyCosmos" id="B8NBI2">
    <property type="glycosylation" value="2 sites, No reported glycans"/>
</dbReference>
<dbReference type="EnsemblFungi" id="EED52855">
    <property type="protein sequence ID" value="EED52855"/>
    <property type="gene ID" value="AFLA_045570"/>
</dbReference>
<dbReference type="VEuPathDB" id="FungiDB:AFLA_008143"/>
<dbReference type="eggNOG" id="ENOG502QTDU">
    <property type="taxonomic scope" value="Eukaryota"/>
</dbReference>
<dbReference type="HOGENOM" id="CLU_027551_1_1_1"/>
<dbReference type="OMA" id="WGPNLQG"/>
<dbReference type="UniPathway" id="UPA00114"/>
<dbReference type="GO" id="GO:0005576">
    <property type="term" value="C:extracellular region"/>
    <property type="evidence" value="ECO:0007669"/>
    <property type="project" value="UniProtKB-SubCell"/>
</dbReference>
<dbReference type="GO" id="GO:0046555">
    <property type="term" value="F:acetylxylan esterase activity"/>
    <property type="evidence" value="ECO:0007669"/>
    <property type="project" value="UniProtKB-EC"/>
</dbReference>
<dbReference type="GO" id="GO:0030245">
    <property type="term" value="P:cellulose catabolic process"/>
    <property type="evidence" value="ECO:0007669"/>
    <property type="project" value="UniProtKB-KW"/>
</dbReference>
<dbReference type="GO" id="GO:0045493">
    <property type="term" value="P:xylan catabolic process"/>
    <property type="evidence" value="ECO:0007669"/>
    <property type="project" value="UniProtKB-UniPathway"/>
</dbReference>
<dbReference type="FunFam" id="3.40.50.1820:FF:000203">
    <property type="entry name" value="Feruloyl esterase B"/>
    <property type="match status" value="1"/>
</dbReference>
<dbReference type="Gene3D" id="3.40.50.1820">
    <property type="entry name" value="alpha/beta hydrolase"/>
    <property type="match status" value="1"/>
</dbReference>
<dbReference type="InterPro" id="IPR029058">
    <property type="entry name" value="AB_hydrolase_fold"/>
</dbReference>
<dbReference type="InterPro" id="IPR010126">
    <property type="entry name" value="Esterase_phb"/>
</dbReference>
<dbReference type="InterPro" id="IPR050955">
    <property type="entry name" value="Plant_Biomass_Hydrol_Est"/>
</dbReference>
<dbReference type="NCBIfam" id="TIGR01840">
    <property type="entry name" value="esterase_phb"/>
    <property type="match status" value="1"/>
</dbReference>
<dbReference type="PANTHER" id="PTHR43037:SF5">
    <property type="entry name" value="FERULOYL ESTERASE"/>
    <property type="match status" value="1"/>
</dbReference>
<dbReference type="PANTHER" id="PTHR43037">
    <property type="entry name" value="UNNAMED PRODUCT-RELATED"/>
    <property type="match status" value="1"/>
</dbReference>
<dbReference type="Pfam" id="PF10503">
    <property type="entry name" value="Esterase_PHB"/>
    <property type="match status" value="1"/>
</dbReference>
<dbReference type="SUPFAM" id="SSF53474">
    <property type="entry name" value="alpha/beta-Hydrolases"/>
    <property type="match status" value="2"/>
</dbReference>
<gene>
    <name type="primary">axeA</name>
    <name type="synonym">aceA</name>
    <name type="ORF">AFLA_045570</name>
</gene>
<accession>B8NBI2</accession>
<feature type="signal peptide" evidence="2">
    <location>
        <begin position="1"/>
        <end position="19"/>
    </location>
</feature>
<feature type="chain" id="PRO_0000393478" description="Probable acetylxylan esterase A">
    <location>
        <begin position="20"/>
        <end position="307"/>
    </location>
</feature>
<feature type="active site" description="Charge relay system" evidence="1">
    <location>
        <position position="150"/>
    </location>
</feature>
<feature type="glycosylation site" description="N-linked (GlcNAc...) asparagine" evidence="2">
    <location>
        <position position="192"/>
    </location>
</feature>
<feature type="glycosylation site" description="N-linked (GlcNAc...) asparagine" evidence="2">
    <location>
        <position position="270"/>
    </location>
</feature>
<keyword id="KW-0119">Carbohydrate metabolism</keyword>
<keyword id="KW-0136">Cellulose degradation</keyword>
<keyword id="KW-0325">Glycoprotein</keyword>
<keyword id="KW-0378">Hydrolase</keyword>
<keyword id="KW-0624">Polysaccharide degradation</keyword>
<keyword id="KW-0964">Secreted</keyword>
<keyword id="KW-0719">Serine esterase</keyword>
<keyword id="KW-0732">Signal</keyword>